<sequence length="901" mass="98970">MAANFKEQSKKHFDLNGQSYTYYDLKAVEEQGITKVSNLPYSIRVLLESLLRQEDDFVITDDHIKALSQFGKDGNEGEVPFKPSRVILQDFTGVPAVVDLASLRKAMDDVGGDITKINPEVPVDLVIDHSVQVDSYANPEALERNMKLEFERNYERYQFLNWATKAFDNYNAVPPATGIVHQVNLEYLASVVHVRDVDGEKTAFPDTLVGTDSHTTMINGIGVLGWGVGGIEAEAGMLGQPSYFPIPEVIGVRLVNSLPQGATATDLALRVTQELRKKGVVGKFVEFFGPGVQHLPLADRATIANMAPEYGATCGFFPVDDESLKYMKLTGRSDEHIALVKEYLKQNHMFFDVEKEDPNYTDVIELDLSTVEASLSGPKRPQDLIFLSDMKSSFENSVTAPAGNQGHGLDKSEFDKKAEINFKDGSKATMKTGDIAIAAITSCTNTSNPYVMLGAGLVAKKAVEKGLKVPEYVKTSLAPGSKVVTGYLRDAGLQPYLDDLGFNLVGYGCTTCIGNSGPLLPEIEKAIADEDLLVTSVLSGNRNFEGRIHPLVKANYLASPQLVVAYALAGTVDIDLQNEPIGKGNDGEDVYLKDIWPSIKEVSDTVDSVVTPELFIEEYNNVYNNNELWNEIDVTDQPLYDFDPNSTYIQNPSFFQGLSKEPGTIVPLNGLRVMGKFGDSVTTDHISPAGAIGKDTPAGKYLQDHQVPIREFNSYGSRRGNHEVMVRGTFANIRIKNQLAPGTEGGFTTYWPTNEVMPIFDAAMKYKEDGTGLVVLAGNDYGMGSSRDWAAKGTNLLGVKTVIAQSYERIHRSNLVMMGVLPLEFKKGESADSLGLDGTEEISVNIDENVQPHDYVKVTAKKQDGDLVEFDAMVRFDSLVEMDYYRHGGILQMVLRNKLAQ</sequence>
<reference key="1">
    <citation type="journal article" date="2004" name="Proc. Natl. Acad. Sci. U.S.A.">
        <title>Complete genomes of two clinical Staphylococcus aureus strains: evidence for the rapid evolution of virulence and drug resistance.</title>
        <authorList>
            <person name="Holden M.T.G."/>
            <person name="Feil E.J."/>
            <person name="Lindsay J.A."/>
            <person name="Peacock S.J."/>
            <person name="Day N.P.J."/>
            <person name="Enright M.C."/>
            <person name="Foster T.J."/>
            <person name="Moore C.E."/>
            <person name="Hurst L."/>
            <person name="Atkin R."/>
            <person name="Barron A."/>
            <person name="Bason N."/>
            <person name="Bentley S.D."/>
            <person name="Chillingworth C."/>
            <person name="Chillingworth T."/>
            <person name="Churcher C."/>
            <person name="Clark L."/>
            <person name="Corton C."/>
            <person name="Cronin A."/>
            <person name="Doggett J."/>
            <person name="Dowd L."/>
            <person name="Feltwell T."/>
            <person name="Hance Z."/>
            <person name="Harris B."/>
            <person name="Hauser H."/>
            <person name="Holroyd S."/>
            <person name="Jagels K."/>
            <person name="James K.D."/>
            <person name="Lennard N."/>
            <person name="Line A."/>
            <person name="Mayes R."/>
            <person name="Moule S."/>
            <person name="Mungall K."/>
            <person name="Ormond D."/>
            <person name="Quail M.A."/>
            <person name="Rabbinowitsch E."/>
            <person name="Rutherford K.M."/>
            <person name="Sanders M."/>
            <person name="Sharp S."/>
            <person name="Simmonds M."/>
            <person name="Stevens K."/>
            <person name="Whitehead S."/>
            <person name="Barrell B.G."/>
            <person name="Spratt B.G."/>
            <person name="Parkhill J."/>
        </authorList>
    </citation>
    <scope>NUCLEOTIDE SEQUENCE [LARGE SCALE GENOMIC DNA]</scope>
    <source>
        <strain>MSSA476</strain>
    </source>
</reference>
<dbReference type="EC" id="4.2.1.3" evidence="3"/>
<dbReference type="EC" id="4.2.1.99" evidence="3"/>
<dbReference type="EMBL" id="BX571857">
    <property type="protein sequence ID" value="CAG43067.1"/>
    <property type="molecule type" value="Genomic_DNA"/>
</dbReference>
<dbReference type="RefSeq" id="WP_000729744.1">
    <property type="nucleotide sequence ID" value="NC_002953.3"/>
</dbReference>
<dbReference type="SMR" id="Q6G9K9"/>
<dbReference type="KEGG" id="sas:SAS1289"/>
<dbReference type="HOGENOM" id="CLU_013476_2_1_9"/>
<dbReference type="UniPathway" id="UPA00223">
    <property type="reaction ID" value="UER00718"/>
</dbReference>
<dbReference type="UniPathway" id="UPA00946"/>
<dbReference type="GO" id="GO:0047456">
    <property type="term" value="F:2-methylisocitrate dehydratase activity"/>
    <property type="evidence" value="ECO:0000250"/>
    <property type="project" value="UniProtKB"/>
</dbReference>
<dbReference type="GO" id="GO:0051539">
    <property type="term" value="F:4 iron, 4 sulfur cluster binding"/>
    <property type="evidence" value="ECO:0000250"/>
    <property type="project" value="UniProtKB"/>
</dbReference>
<dbReference type="GO" id="GO:0003994">
    <property type="term" value="F:aconitate hydratase activity"/>
    <property type="evidence" value="ECO:0000250"/>
    <property type="project" value="UniProtKB"/>
</dbReference>
<dbReference type="GO" id="GO:0046872">
    <property type="term" value="F:metal ion binding"/>
    <property type="evidence" value="ECO:0007669"/>
    <property type="project" value="UniProtKB-KW"/>
</dbReference>
<dbReference type="GO" id="GO:0003730">
    <property type="term" value="F:mRNA 3'-UTR binding"/>
    <property type="evidence" value="ECO:0000250"/>
    <property type="project" value="UniProtKB"/>
</dbReference>
<dbReference type="GO" id="GO:0003729">
    <property type="term" value="F:mRNA binding"/>
    <property type="evidence" value="ECO:0000250"/>
    <property type="project" value="UniProtKB"/>
</dbReference>
<dbReference type="GO" id="GO:0019679">
    <property type="term" value="P:propionate metabolic process, methylcitrate cycle"/>
    <property type="evidence" value="ECO:0000250"/>
    <property type="project" value="UniProtKB"/>
</dbReference>
<dbReference type="GO" id="GO:0006099">
    <property type="term" value="P:tricarboxylic acid cycle"/>
    <property type="evidence" value="ECO:0000250"/>
    <property type="project" value="UniProtKB"/>
</dbReference>
<dbReference type="CDD" id="cd01586">
    <property type="entry name" value="AcnA_IRP"/>
    <property type="match status" value="1"/>
</dbReference>
<dbReference type="CDD" id="cd01580">
    <property type="entry name" value="AcnA_IRP_Swivel"/>
    <property type="match status" value="1"/>
</dbReference>
<dbReference type="FunFam" id="3.20.19.10:FF:000001">
    <property type="entry name" value="Aconitate hydratase"/>
    <property type="match status" value="1"/>
</dbReference>
<dbReference type="FunFam" id="3.30.499.10:FF:000002">
    <property type="entry name" value="Aconitate hydratase"/>
    <property type="match status" value="1"/>
</dbReference>
<dbReference type="FunFam" id="3.30.499.10:FF:000005">
    <property type="entry name" value="cytoplasmic aconitate hydratase"/>
    <property type="match status" value="1"/>
</dbReference>
<dbReference type="Gene3D" id="6.10.190.10">
    <property type="match status" value="1"/>
</dbReference>
<dbReference type="Gene3D" id="3.30.499.10">
    <property type="entry name" value="Aconitase, domain 3"/>
    <property type="match status" value="2"/>
</dbReference>
<dbReference type="Gene3D" id="3.20.19.10">
    <property type="entry name" value="Aconitase, domain 4"/>
    <property type="match status" value="1"/>
</dbReference>
<dbReference type="InterPro" id="IPR044137">
    <property type="entry name" value="AcnA_IRP_Swivel"/>
</dbReference>
<dbReference type="InterPro" id="IPR015931">
    <property type="entry name" value="Acnase/IPM_dHydase_lsu_aba_1/3"/>
</dbReference>
<dbReference type="InterPro" id="IPR001030">
    <property type="entry name" value="Acoase/IPM_deHydtase_lsu_aba"/>
</dbReference>
<dbReference type="InterPro" id="IPR015928">
    <property type="entry name" value="Aconitase/3IPM_dehydase_swvl"/>
</dbReference>
<dbReference type="InterPro" id="IPR006249">
    <property type="entry name" value="Aconitase/IRP2"/>
</dbReference>
<dbReference type="InterPro" id="IPR018136">
    <property type="entry name" value="Aconitase_4Fe-4S_BS"/>
</dbReference>
<dbReference type="InterPro" id="IPR036008">
    <property type="entry name" value="Aconitase_4Fe-4S_dom"/>
</dbReference>
<dbReference type="InterPro" id="IPR000573">
    <property type="entry name" value="AconitaseA/IPMdHydase_ssu_swvl"/>
</dbReference>
<dbReference type="NCBIfam" id="TIGR01341">
    <property type="entry name" value="aconitase_1"/>
    <property type="match status" value="1"/>
</dbReference>
<dbReference type="NCBIfam" id="NF006757">
    <property type="entry name" value="PRK09277.1"/>
    <property type="match status" value="1"/>
</dbReference>
<dbReference type="NCBIfam" id="NF009520">
    <property type="entry name" value="PRK12881.1"/>
    <property type="match status" value="1"/>
</dbReference>
<dbReference type="PANTHER" id="PTHR11670">
    <property type="entry name" value="ACONITASE/IRON-RESPONSIVE ELEMENT FAMILY MEMBER"/>
    <property type="match status" value="1"/>
</dbReference>
<dbReference type="Pfam" id="PF00330">
    <property type="entry name" value="Aconitase"/>
    <property type="match status" value="1"/>
</dbReference>
<dbReference type="Pfam" id="PF00694">
    <property type="entry name" value="Aconitase_C"/>
    <property type="match status" value="1"/>
</dbReference>
<dbReference type="PRINTS" id="PR00415">
    <property type="entry name" value="ACONITASE"/>
</dbReference>
<dbReference type="SUPFAM" id="SSF53732">
    <property type="entry name" value="Aconitase iron-sulfur domain"/>
    <property type="match status" value="1"/>
</dbReference>
<dbReference type="SUPFAM" id="SSF52016">
    <property type="entry name" value="LeuD/IlvD-like"/>
    <property type="match status" value="1"/>
</dbReference>
<dbReference type="PROSITE" id="PS00450">
    <property type="entry name" value="ACONITASE_1"/>
    <property type="match status" value="1"/>
</dbReference>
<dbReference type="PROSITE" id="PS01244">
    <property type="entry name" value="ACONITASE_2"/>
    <property type="match status" value="1"/>
</dbReference>
<keyword id="KW-0408">Iron</keyword>
<keyword id="KW-0411">Iron-sulfur</keyword>
<keyword id="KW-0456">Lyase</keyword>
<keyword id="KW-0479">Metal-binding</keyword>
<keyword id="KW-0694">RNA-binding</keyword>
<keyword id="KW-0816">Tricarboxylic acid cycle</keyword>
<accession>Q6G9K9</accession>
<name>ACNA_STAAS</name>
<comment type="function">
    <text evidence="1 3">Involved in the catabolism of short chain fatty acids (SCFA) via the tricarboxylic acid (TCA)(acetyl degradation route) and probably the 2-methylcitrate cycle I (propionate degradation route). Catalyzes the reversible isomerization of citrate to isocitrate via cis-aconitate. Could catalyze the hydration of 2-methyl-cis-aconitate to yield (2R,3S)-2-methylisocitrate. The apo form of AcnA functions as a RNA-binding regulatory protein.</text>
</comment>
<comment type="catalytic activity">
    <reaction evidence="3">
        <text>citrate = D-threo-isocitrate</text>
        <dbReference type="Rhea" id="RHEA:10336"/>
        <dbReference type="ChEBI" id="CHEBI:15562"/>
        <dbReference type="ChEBI" id="CHEBI:16947"/>
        <dbReference type="EC" id="4.2.1.3"/>
    </reaction>
</comment>
<comment type="catalytic activity">
    <reaction evidence="3">
        <text>(2S,3R)-3-hydroxybutane-1,2,3-tricarboxylate = 2-methyl-cis-aconitate + H2O</text>
        <dbReference type="Rhea" id="RHEA:17941"/>
        <dbReference type="ChEBI" id="CHEBI:15377"/>
        <dbReference type="ChEBI" id="CHEBI:57429"/>
        <dbReference type="ChEBI" id="CHEBI:57872"/>
        <dbReference type="EC" id="4.2.1.99"/>
    </reaction>
</comment>
<comment type="cofactor">
    <cofactor evidence="1">
        <name>[4Fe-4S] cluster</name>
        <dbReference type="ChEBI" id="CHEBI:49883"/>
    </cofactor>
    <text evidence="1">Binds 1 [4Fe-4S] cluster per subunit.</text>
</comment>
<comment type="pathway">
    <text evidence="3">Carbohydrate metabolism; tricarboxylic acid cycle; isocitrate from oxaloacetate: step 2/2.</text>
</comment>
<comment type="pathway">
    <text evidence="3">Organic acid metabolism; propanoate degradation.</text>
</comment>
<comment type="subunit">
    <text evidence="1">Monomer.</text>
</comment>
<comment type="similarity">
    <text evidence="4">Belongs to the aconitase/IPM isomerase family.</text>
</comment>
<proteinExistence type="inferred from homology"/>
<feature type="chain" id="PRO_0000076670" description="Aconitate hydratase A">
    <location>
        <begin position="1"/>
        <end position="901"/>
    </location>
</feature>
<feature type="binding site" evidence="2">
    <location>
        <position position="443"/>
    </location>
    <ligand>
        <name>[4Fe-4S] cluster</name>
        <dbReference type="ChEBI" id="CHEBI:49883"/>
    </ligand>
</feature>
<feature type="binding site" evidence="2">
    <location>
        <position position="509"/>
    </location>
    <ligand>
        <name>[4Fe-4S] cluster</name>
        <dbReference type="ChEBI" id="CHEBI:49883"/>
    </ligand>
</feature>
<feature type="binding site" evidence="2">
    <location>
        <position position="512"/>
    </location>
    <ligand>
        <name>[4Fe-4S] cluster</name>
        <dbReference type="ChEBI" id="CHEBI:49883"/>
    </ligand>
</feature>
<evidence type="ECO:0000250" key="1">
    <source>
        <dbReference type="UniProtKB" id="P09339"/>
    </source>
</evidence>
<evidence type="ECO:0000250" key="2">
    <source>
        <dbReference type="UniProtKB" id="P36683"/>
    </source>
</evidence>
<evidence type="ECO:0000250" key="3">
    <source>
        <dbReference type="UniProtKB" id="Q8ZP52"/>
    </source>
</evidence>
<evidence type="ECO:0000305" key="4"/>
<gene>
    <name type="primary">acnA</name>
    <name type="synonym">citB</name>
    <name type="ordered locus">SAS1289</name>
</gene>
<organism>
    <name type="scientific">Staphylococcus aureus (strain MSSA476)</name>
    <dbReference type="NCBI Taxonomy" id="282459"/>
    <lineage>
        <taxon>Bacteria</taxon>
        <taxon>Bacillati</taxon>
        <taxon>Bacillota</taxon>
        <taxon>Bacilli</taxon>
        <taxon>Bacillales</taxon>
        <taxon>Staphylococcaceae</taxon>
        <taxon>Staphylococcus</taxon>
    </lineage>
</organism>
<protein>
    <recommendedName>
        <fullName evidence="3">Aconitate hydratase A</fullName>
        <shortName evidence="3">ACN</shortName>
        <shortName evidence="3">Aconitase</shortName>
        <ecNumber evidence="3">4.2.1.3</ecNumber>
    </recommendedName>
    <alternativeName>
        <fullName evidence="3">(2R,3S)-2-methylisocitrate dehydratase</fullName>
    </alternativeName>
    <alternativeName>
        <fullName evidence="3">(2S,3R)-3-hydroxybutane-1,2,3-tricarboxylate dehydratase</fullName>
    </alternativeName>
    <alternativeName>
        <fullName evidence="1">Iron-responsive protein-like</fullName>
        <shortName evidence="1">IRP-like</shortName>
    </alternativeName>
    <alternativeName>
        <fullName evidence="3">Probable 2-methyl-cis-aconitate hydratase</fullName>
        <ecNumber evidence="3">4.2.1.99</ecNumber>
    </alternativeName>
    <alternativeName>
        <fullName evidence="1">RNA-binding protein</fullName>
    </alternativeName>
</protein>